<accession>O15692</accession>
<accession>Q54NG8</accession>
<proteinExistence type="evidence at transcript level"/>
<name>DRE2_DICDI</name>
<dbReference type="EMBL" id="AF011338">
    <property type="protein sequence ID" value="AAB65393.1"/>
    <property type="molecule type" value="mRNA"/>
</dbReference>
<dbReference type="EMBL" id="AAFI02000077">
    <property type="protein sequence ID" value="EAL64789.1"/>
    <property type="molecule type" value="Genomic_DNA"/>
</dbReference>
<dbReference type="RefSeq" id="XP_638301.1">
    <property type="nucleotide sequence ID" value="XM_633209.1"/>
</dbReference>
<dbReference type="SMR" id="O15692"/>
<dbReference type="FunCoup" id="O15692">
    <property type="interactions" value="237"/>
</dbReference>
<dbReference type="STRING" id="44689.O15692"/>
<dbReference type="PaxDb" id="44689-DDB0216275"/>
<dbReference type="EnsemblProtists" id="EAL64789">
    <property type="protein sequence ID" value="EAL64789"/>
    <property type="gene ID" value="DDB_G0285251"/>
</dbReference>
<dbReference type="GeneID" id="8625018"/>
<dbReference type="KEGG" id="ddi:DDB_G0285251"/>
<dbReference type="dictyBase" id="DDB_G0285251">
    <property type="gene designation" value="rsc43"/>
</dbReference>
<dbReference type="VEuPathDB" id="AmoebaDB:DDB_G0285251"/>
<dbReference type="eggNOG" id="KOG4020">
    <property type="taxonomic scope" value="Eukaryota"/>
</dbReference>
<dbReference type="HOGENOM" id="CLU_064393_0_0_1"/>
<dbReference type="InParanoid" id="O15692"/>
<dbReference type="OMA" id="GCGNCYK"/>
<dbReference type="PhylomeDB" id="O15692"/>
<dbReference type="PRO" id="PR:O15692"/>
<dbReference type="Proteomes" id="UP000002195">
    <property type="component" value="Chromosome 4"/>
</dbReference>
<dbReference type="GO" id="GO:0005737">
    <property type="term" value="C:cytoplasm"/>
    <property type="evidence" value="ECO:0000318"/>
    <property type="project" value="GO_Central"/>
</dbReference>
<dbReference type="GO" id="GO:0005758">
    <property type="term" value="C:mitochondrial intermembrane space"/>
    <property type="evidence" value="ECO:0007669"/>
    <property type="project" value="UniProtKB-SubCell"/>
</dbReference>
<dbReference type="GO" id="GO:0051537">
    <property type="term" value="F:2 iron, 2 sulfur cluster binding"/>
    <property type="evidence" value="ECO:0007669"/>
    <property type="project" value="UniProtKB-UniRule"/>
</dbReference>
<dbReference type="GO" id="GO:0051539">
    <property type="term" value="F:4 iron, 4 sulfur cluster binding"/>
    <property type="evidence" value="ECO:0007669"/>
    <property type="project" value="UniProtKB-KW"/>
</dbReference>
<dbReference type="GO" id="GO:0009055">
    <property type="term" value="F:electron transfer activity"/>
    <property type="evidence" value="ECO:0007669"/>
    <property type="project" value="UniProtKB-UniRule"/>
</dbReference>
<dbReference type="GO" id="GO:0046872">
    <property type="term" value="F:metal ion binding"/>
    <property type="evidence" value="ECO:0007669"/>
    <property type="project" value="UniProtKB-KW"/>
</dbReference>
<dbReference type="GO" id="GO:0016226">
    <property type="term" value="P:iron-sulfur cluster assembly"/>
    <property type="evidence" value="ECO:0000318"/>
    <property type="project" value="GO_Central"/>
</dbReference>
<dbReference type="Gene3D" id="3.40.50.150">
    <property type="entry name" value="Vaccinia Virus protein VP39"/>
    <property type="match status" value="1"/>
</dbReference>
<dbReference type="HAMAP" id="MF_03115">
    <property type="entry name" value="Anamorsin"/>
    <property type="match status" value="1"/>
</dbReference>
<dbReference type="InterPro" id="IPR007785">
    <property type="entry name" value="Anamorsin"/>
</dbReference>
<dbReference type="InterPro" id="IPR046408">
    <property type="entry name" value="CIAPIN1"/>
</dbReference>
<dbReference type="InterPro" id="IPR029063">
    <property type="entry name" value="SAM-dependent_MTases_sf"/>
</dbReference>
<dbReference type="PANTHER" id="PTHR13273">
    <property type="entry name" value="ANAMORSIN"/>
    <property type="match status" value="1"/>
</dbReference>
<dbReference type="PANTHER" id="PTHR13273:SF14">
    <property type="entry name" value="ANAMORSIN"/>
    <property type="match status" value="1"/>
</dbReference>
<dbReference type="Pfam" id="PF05093">
    <property type="entry name" value="CIAPIN1"/>
    <property type="match status" value="1"/>
</dbReference>
<gene>
    <name type="primary">rsc43</name>
    <name type="ORF">DDB_G0285251</name>
</gene>
<evidence type="ECO:0000255" key="1">
    <source>
        <dbReference type="HAMAP-Rule" id="MF_03115"/>
    </source>
</evidence>
<evidence type="ECO:0000256" key="2">
    <source>
        <dbReference type="SAM" id="MobiDB-lite"/>
    </source>
</evidence>
<sequence>MNSLSLELNKEQEVLIISDVENSESIINQVKELSKTVTTSLSKEQQQIQNNFDHVIIISSKPFNSALISMYSNLLKKGGKLSIYQTNENETLVNSGMDFLIGGLVDFKATSNSTYKTIVHADKPSWDTNESSTINIPSTSSNNPWASIEGGDRINENDLVSENDKTSKPATTLDDCEVGKTKKACKNCTCGRAEEENQSKPKLTKEMIENPGVGSSCGNCSLGDAFRCGGCPYRGLPTFKVGEKIQLPDDFLVDDI</sequence>
<feature type="chain" id="PRO_0000392332" description="Anamorsin homolog">
    <location>
        <begin position="1"/>
        <end position="256"/>
    </location>
</feature>
<feature type="region of interest" description="N-terminal SAM-like domain" evidence="1">
    <location>
        <begin position="1"/>
        <end position="136"/>
    </location>
</feature>
<feature type="region of interest" description="Disordered" evidence="2">
    <location>
        <begin position="126"/>
        <end position="148"/>
    </location>
</feature>
<feature type="region of interest" description="Linker" evidence="1">
    <location>
        <begin position="137"/>
        <end position="166"/>
    </location>
</feature>
<feature type="region of interest" description="Fe-S binding site A" evidence="1">
    <location>
        <begin position="176"/>
        <end position="190"/>
    </location>
</feature>
<feature type="region of interest" description="Fe-S binding site B" evidence="1">
    <location>
        <begin position="217"/>
        <end position="231"/>
    </location>
</feature>
<feature type="short sequence motif" description="Cx2C motif 1" evidence="1">
    <location>
        <begin position="217"/>
        <end position="220"/>
    </location>
</feature>
<feature type="short sequence motif" description="Cx2C motif 2" evidence="1">
    <location>
        <begin position="228"/>
        <end position="231"/>
    </location>
</feature>
<feature type="compositionally biased region" description="Low complexity" evidence="2">
    <location>
        <begin position="131"/>
        <end position="144"/>
    </location>
</feature>
<feature type="binding site" evidence="1">
    <location>
        <position position="176"/>
    </location>
    <ligand>
        <name>[2Fe-2S] cluster</name>
        <dbReference type="ChEBI" id="CHEBI:190135"/>
    </ligand>
</feature>
<feature type="binding site" evidence="1">
    <location>
        <position position="185"/>
    </location>
    <ligand>
        <name>[2Fe-2S] cluster</name>
        <dbReference type="ChEBI" id="CHEBI:190135"/>
    </ligand>
</feature>
<feature type="binding site" evidence="1">
    <location>
        <position position="188"/>
    </location>
    <ligand>
        <name>[2Fe-2S] cluster</name>
        <dbReference type="ChEBI" id="CHEBI:190135"/>
    </ligand>
</feature>
<feature type="binding site" evidence="1">
    <location>
        <position position="190"/>
    </location>
    <ligand>
        <name>[2Fe-2S] cluster</name>
        <dbReference type="ChEBI" id="CHEBI:190135"/>
    </ligand>
</feature>
<feature type="binding site" evidence="1">
    <location>
        <position position="217"/>
    </location>
    <ligand>
        <name>[4Fe-4S] cluster</name>
        <dbReference type="ChEBI" id="CHEBI:49883"/>
    </ligand>
</feature>
<feature type="binding site" evidence="1">
    <location>
        <position position="220"/>
    </location>
    <ligand>
        <name>[4Fe-4S] cluster</name>
        <dbReference type="ChEBI" id="CHEBI:49883"/>
    </ligand>
</feature>
<feature type="binding site" evidence="1">
    <location>
        <position position="228"/>
    </location>
    <ligand>
        <name>[4Fe-4S] cluster</name>
        <dbReference type="ChEBI" id="CHEBI:49883"/>
    </ligand>
</feature>
<feature type="binding site" evidence="1">
    <location>
        <position position="231"/>
    </location>
    <ligand>
        <name>[4Fe-4S] cluster</name>
        <dbReference type="ChEBI" id="CHEBI:49883"/>
    </ligand>
</feature>
<reference key="1">
    <citation type="submission" date="1997-06" db="EMBL/GenBank/DDBJ databases">
        <authorList>
            <person name="Loomis W.F."/>
            <person name="Iranfar N."/>
        </authorList>
    </citation>
    <scope>NUCLEOTIDE SEQUENCE [MRNA]</scope>
    <source>
        <strain>AX4</strain>
    </source>
</reference>
<reference key="2">
    <citation type="journal article" date="2005" name="Nature">
        <title>The genome of the social amoeba Dictyostelium discoideum.</title>
        <authorList>
            <person name="Eichinger L."/>
            <person name="Pachebat J.A."/>
            <person name="Gloeckner G."/>
            <person name="Rajandream M.A."/>
            <person name="Sucgang R."/>
            <person name="Berriman M."/>
            <person name="Song J."/>
            <person name="Olsen R."/>
            <person name="Szafranski K."/>
            <person name="Xu Q."/>
            <person name="Tunggal B."/>
            <person name="Kummerfeld S."/>
            <person name="Madera M."/>
            <person name="Konfortov B.A."/>
            <person name="Rivero F."/>
            <person name="Bankier A.T."/>
            <person name="Lehmann R."/>
            <person name="Hamlin N."/>
            <person name="Davies R."/>
            <person name="Gaudet P."/>
            <person name="Fey P."/>
            <person name="Pilcher K."/>
            <person name="Chen G."/>
            <person name="Saunders D."/>
            <person name="Sodergren E.J."/>
            <person name="Davis P."/>
            <person name="Kerhornou A."/>
            <person name="Nie X."/>
            <person name="Hall N."/>
            <person name="Anjard C."/>
            <person name="Hemphill L."/>
            <person name="Bason N."/>
            <person name="Farbrother P."/>
            <person name="Desany B."/>
            <person name="Just E."/>
            <person name="Morio T."/>
            <person name="Rost R."/>
            <person name="Churcher C.M."/>
            <person name="Cooper J."/>
            <person name="Haydock S."/>
            <person name="van Driessche N."/>
            <person name="Cronin A."/>
            <person name="Goodhead I."/>
            <person name="Muzny D.M."/>
            <person name="Mourier T."/>
            <person name="Pain A."/>
            <person name="Lu M."/>
            <person name="Harper D."/>
            <person name="Lindsay R."/>
            <person name="Hauser H."/>
            <person name="James K.D."/>
            <person name="Quiles M."/>
            <person name="Madan Babu M."/>
            <person name="Saito T."/>
            <person name="Buchrieser C."/>
            <person name="Wardroper A."/>
            <person name="Felder M."/>
            <person name="Thangavelu M."/>
            <person name="Johnson D."/>
            <person name="Knights A."/>
            <person name="Loulseged H."/>
            <person name="Mungall K.L."/>
            <person name="Oliver K."/>
            <person name="Price C."/>
            <person name="Quail M.A."/>
            <person name="Urushihara H."/>
            <person name="Hernandez J."/>
            <person name="Rabbinowitsch E."/>
            <person name="Steffen D."/>
            <person name="Sanders M."/>
            <person name="Ma J."/>
            <person name="Kohara Y."/>
            <person name="Sharp S."/>
            <person name="Simmonds M.N."/>
            <person name="Spiegler S."/>
            <person name="Tivey A."/>
            <person name="Sugano S."/>
            <person name="White B."/>
            <person name="Walker D."/>
            <person name="Woodward J.R."/>
            <person name="Winckler T."/>
            <person name="Tanaka Y."/>
            <person name="Shaulsky G."/>
            <person name="Schleicher M."/>
            <person name="Weinstock G.M."/>
            <person name="Rosenthal A."/>
            <person name="Cox E.C."/>
            <person name="Chisholm R.L."/>
            <person name="Gibbs R.A."/>
            <person name="Loomis W.F."/>
            <person name="Platzer M."/>
            <person name="Kay R.R."/>
            <person name="Williams J.G."/>
            <person name="Dear P.H."/>
            <person name="Noegel A.A."/>
            <person name="Barrell B.G."/>
            <person name="Kuspa A."/>
        </authorList>
    </citation>
    <scope>NUCLEOTIDE SEQUENCE [LARGE SCALE GENOMIC DNA]</scope>
    <source>
        <strain>AX4</strain>
    </source>
</reference>
<comment type="function">
    <text evidence="1">Component of the cytosolic iron-sulfur (Fe-S) protein assembly (CIA) machinery. Required for the maturation of extramitochondrial Fe-S proteins. Part of an electron transfer chain functioning in an early step of cytosolic Fe-S biogenesis, facilitating the de novo assembly of a [4Fe-4S] cluster on the cytosolic Fe-S scaffold complex. Electrons are transferred from NADPH via a FAD- and FMN-containing diflavin oxidoreductase. Together with the diflavin oxidoreductase, also required for the assembly of the diferric tyrosyl radical cofactor of ribonucleotide reductase (RNR), probably by providing electrons for reduction during radical cofactor maturation in the catalytic small subunit.</text>
</comment>
<comment type="cofactor">
    <cofactor evidence="1">
        <name>[2Fe-2S] cluster</name>
        <dbReference type="ChEBI" id="CHEBI:190135"/>
    </cofactor>
</comment>
<comment type="cofactor">
    <cofactor evidence="1">
        <name>[4Fe-4S] cluster</name>
        <dbReference type="ChEBI" id="CHEBI:49883"/>
    </cofactor>
</comment>
<comment type="subunit">
    <text evidence="1">Monomer.</text>
</comment>
<comment type="subcellular location">
    <subcellularLocation>
        <location evidence="1">Cytoplasm</location>
    </subcellularLocation>
    <subcellularLocation>
        <location evidence="1">Mitochondrion intermembrane space</location>
    </subcellularLocation>
</comment>
<comment type="domain">
    <text evidence="1">The C-terminal domain binds 2 Fe-S clusters but is otherwise mostly in an intrinsically disordered conformation.</text>
</comment>
<comment type="domain">
    <text evidence="1">The N-terminal domain has structural similarity with S-adenosyl-L-methionine-dependent methyltransferases, but does not bind S-adenosyl-L-methionine. It is required for correct assembly of the 2 Fe-S clusters.</text>
</comment>
<comment type="domain">
    <text evidence="1">The twin Cx2C motifs are involved in the recognition by the mitochondrial MIA40-ERV1 disulfide relay system. The formation of 2 disulfide bonds in the Cx2C motifs through dithiol/disulfide exchange reactions effectively traps the protein in the mitochondrial intermembrane space.</text>
</comment>
<comment type="similarity">
    <text evidence="1">Belongs to the anamorsin family.</text>
</comment>
<keyword id="KW-0001">2Fe-2S</keyword>
<keyword id="KW-0004">4Fe-4S</keyword>
<keyword id="KW-0963">Cytoplasm</keyword>
<keyword id="KW-0408">Iron</keyword>
<keyword id="KW-0411">Iron-sulfur</keyword>
<keyword id="KW-0479">Metal-binding</keyword>
<keyword id="KW-0496">Mitochondrion</keyword>
<keyword id="KW-1185">Reference proteome</keyword>
<organism>
    <name type="scientific">Dictyostelium discoideum</name>
    <name type="common">Social amoeba</name>
    <dbReference type="NCBI Taxonomy" id="44689"/>
    <lineage>
        <taxon>Eukaryota</taxon>
        <taxon>Amoebozoa</taxon>
        <taxon>Evosea</taxon>
        <taxon>Eumycetozoa</taxon>
        <taxon>Dictyostelia</taxon>
        <taxon>Dictyosteliales</taxon>
        <taxon>Dictyosteliaceae</taxon>
        <taxon>Dictyostelium</taxon>
    </lineage>
</organism>
<protein>
    <recommendedName>
        <fullName evidence="1">Anamorsin homolog</fullName>
    </recommendedName>
    <alternativeName>
        <fullName evidence="1">Fe-S cluster assembly protein DRE2 homolog</fullName>
    </alternativeName>
</protein>